<reference key="1">
    <citation type="journal article" date="2004" name="Science">
        <title>The Ashbya gossypii genome as a tool for mapping the ancient Saccharomyces cerevisiae genome.</title>
        <authorList>
            <person name="Dietrich F.S."/>
            <person name="Voegeli S."/>
            <person name="Brachat S."/>
            <person name="Lerch A."/>
            <person name="Gates K."/>
            <person name="Steiner S."/>
            <person name="Mohr C."/>
            <person name="Poehlmann R."/>
            <person name="Luedi P."/>
            <person name="Choi S."/>
            <person name="Wing R.A."/>
            <person name="Flavier A."/>
            <person name="Gaffney T.D."/>
            <person name="Philippsen P."/>
        </authorList>
    </citation>
    <scope>NUCLEOTIDE SEQUENCE [LARGE SCALE GENOMIC DNA]</scope>
    <source>
        <strain>ATCC 10895 / CBS 109.51 / FGSC 9923 / NRRL Y-1056</strain>
    </source>
</reference>
<reference key="2">
    <citation type="journal article" date="2013" name="G3 (Bethesda)">
        <title>Genomes of Ashbya fungi isolated from insects reveal four mating-type loci, numerous translocations, lack of transposons, and distinct gene duplications.</title>
        <authorList>
            <person name="Dietrich F.S."/>
            <person name="Voegeli S."/>
            <person name="Kuo S."/>
            <person name="Philippsen P."/>
        </authorList>
    </citation>
    <scope>GENOME REANNOTATION</scope>
    <source>
        <strain>ATCC 10895 / CBS 109.51 / FGSC 9923 / NRRL Y-1056</strain>
    </source>
</reference>
<feature type="chain" id="PRO_0000227954" description="ATP-dependent RNA helicase DHH1">
    <location>
        <begin position="1"/>
        <end position="484"/>
    </location>
</feature>
<feature type="domain" description="Helicase ATP-binding" evidence="2">
    <location>
        <begin position="60"/>
        <end position="230"/>
    </location>
</feature>
<feature type="domain" description="Helicase C-terminal" evidence="3">
    <location>
        <begin position="240"/>
        <end position="400"/>
    </location>
</feature>
<feature type="region of interest" description="Disordered" evidence="4">
    <location>
        <begin position="1"/>
        <end position="23"/>
    </location>
</feature>
<feature type="region of interest" description="Disordered" evidence="4">
    <location>
        <begin position="429"/>
        <end position="484"/>
    </location>
</feature>
<feature type="short sequence motif" description="Q motif">
    <location>
        <begin position="29"/>
        <end position="57"/>
    </location>
</feature>
<feature type="short sequence motif" description="DEAD box">
    <location>
        <begin position="178"/>
        <end position="181"/>
    </location>
</feature>
<feature type="compositionally biased region" description="Basic and acidic residues" evidence="4">
    <location>
        <begin position="1"/>
        <end position="20"/>
    </location>
</feature>
<feature type="compositionally biased region" description="Low complexity" evidence="4">
    <location>
        <begin position="429"/>
        <end position="457"/>
    </location>
</feature>
<feature type="binding site" evidence="2">
    <location>
        <begin position="73"/>
        <end position="80"/>
    </location>
    <ligand>
        <name>ATP</name>
        <dbReference type="ChEBI" id="CHEBI:30616"/>
    </ligand>
</feature>
<protein>
    <recommendedName>
        <fullName>ATP-dependent RNA helicase DHH1</fullName>
        <ecNumber>3.6.4.13</ecNumber>
    </recommendedName>
</protein>
<comment type="function">
    <text evidence="1">ATP-dependent RNA helicase involved in mRNA turnover, and more specifically in mRNA decapping by activating the decapping enzyme DCP1. Is involved in G1/S DNA-damage checkpoint recovery, probably through the regulation of the translational status of a subset of mRNAs. May also have a role in translation and mRNA nuclear export (By similarity).</text>
</comment>
<comment type="catalytic activity">
    <reaction>
        <text>ATP + H2O = ADP + phosphate + H(+)</text>
        <dbReference type="Rhea" id="RHEA:13065"/>
        <dbReference type="ChEBI" id="CHEBI:15377"/>
        <dbReference type="ChEBI" id="CHEBI:15378"/>
        <dbReference type="ChEBI" id="CHEBI:30616"/>
        <dbReference type="ChEBI" id="CHEBI:43474"/>
        <dbReference type="ChEBI" id="CHEBI:456216"/>
        <dbReference type="EC" id="3.6.4.13"/>
    </reaction>
</comment>
<comment type="subcellular location">
    <subcellularLocation>
        <location evidence="1">Cytoplasm</location>
        <location evidence="1">P-body</location>
    </subcellularLocation>
    <text evidence="1">Is concentrated in several cytoplasmic foci called P bodies (or cytoplasmic processing bodies) which represent sites of mRNA decapping and 5' to 3' exonucleotidic decay.</text>
</comment>
<comment type="domain">
    <text>The Q motif is unique to and characteristic of the DEAD box family of RNA helicases and controls ATP binding and hydrolysis.</text>
</comment>
<comment type="similarity">
    <text evidence="5">Belongs to the DEAD box helicase family. DDX6/DHH1 subfamily.</text>
</comment>
<evidence type="ECO:0000250" key="1"/>
<evidence type="ECO:0000255" key="2">
    <source>
        <dbReference type="PROSITE-ProRule" id="PRU00541"/>
    </source>
</evidence>
<evidence type="ECO:0000255" key="3">
    <source>
        <dbReference type="PROSITE-ProRule" id="PRU00542"/>
    </source>
</evidence>
<evidence type="ECO:0000256" key="4">
    <source>
        <dbReference type="SAM" id="MobiDB-lite"/>
    </source>
</evidence>
<evidence type="ECO:0000305" key="5"/>
<accession>Q75BS4</accession>
<sequence>MSEDWKKKLNIPKKDTRPQTDDVLNTKGNTFEDFYLRRELLMGIFEAGFERPSPIQEEAIPIALARRDILARAKNGTGKTAAFVIPTLEIVKPKVNKIQALIMVPTRELALQTSQVVRTLGKHCGISCMVTTGGTNLRDDIMRLNEPVHVLVGTPGRVLDLASRKVADLSECSLFVMDEADKMLSRDFKSLVEQILSFLPQNHQSLLFSATFPLTVKEFMVKHLNKPYEINLMDELTLKGITQYYAFVEERQKLHCLNTLFSKLQINQAIIFCNSTNRVELLAKKITDLGYSCYYSHARMKQQERNKVFHEFRQGKVRTLVCSDLLTRGIDIQAVNVVINFDFPKTAETYLHRIGRSGRFGHLGLAINLINWNDRFNLYKIEQELGTEIAAIPAQIDKSLYVAEDTSAVPVPFPLDTMQGNARAAQQMPHPQQQAQLGGMPQPIPQQIQPPLAHQQAQPPPQVYPPQMYHQGIPPQQFANPPQF</sequence>
<dbReference type="EC" id="3.6.4.13"/>
<dbReference type="EMBL" id="AE016816">
    <property type="protein sequence ID" value="AAS51423.1"/>
    <property type="molecule type" value="Genomic_DNA"/>
</dbReference>
<dbReference type="RefSeq" id="NP_983599.1">
    <property type="nucleotide sequence ID" value="NM_208952.1"/>
</dbReference>
<dbReference type="SMR" id="Q75BS4"/>
<dbReference type="FunCoup" id="Q75BS4">
    <property type="interactions" value="1423"/>
</dbReference>
<dbReference type="STRING" id="284811.Q75BS4"/>
<dbReference type="EnsemblFungi" id="AAS51423">
    <property type="protein sequence ID" value="AAS51423"/>
    <property type="gene ID" value="AGOS_ACR197W"/>
</dbReference>
<dbReference type="GeneID" id="4619731"/>
<dbReference type="KEGG" id="ago:AGOS_ACR197W"/>
<dbReference type="eggNOG" id="KOG0326">
    <property type="taxonomic scope" value="Eukaryota"/>
</dbReference>
<dbReference type="HOGENOM" id="CLU_003041_30_2_1"/>
<dbReference type="InParanoid" id="Q75BS4"/>
<dbReference type="OMA" id="TYEDRHT"/>
<dbReference type="OrthoDB" id="10265785at2759"/>
<dbReference type="Proteomes" id="UP000000591">
    <property type="component" value="Chromosome III"/>
</dbReference>
<dbReference type="GO" id="GO:0098562">
    <property type="term" value="C:cytoplasmic side of membrane"/>
    <property type="evidence" value="ECO:0007669"/>
    <property type="project" value="EnsemblFungi"/>
</dbReference>
<dbReference type="GO" id="GO:0010494">
    <property type="term" value="C:cytoplasmic stress granule"/>
    <property type="evidence" value="ECO:0000318"/>
    <property type="project" value="GO_Central"/>
</dbReference>
<dbReference type="GO" id="GO:0000932">
    <property type="term" value="C:P-body"/>
    <property type="evidence" value="ECO:0000318"/>
    <property type="project" value="GO_Central"/>
</dbReference>
<dbReference type="GO" id="GO:0005524">
    <property type="term" value="F:ATP binding"/>
    <property type="evidence" value="ECO:0007669"/>
    <property type="project" value="UniProtKB-KW"/>
</dbReference>
<dbReference type="GO" id="GO:0016887">
    <property type="term" value="F:ATP hydrolysis activity"/>
    <property type="evidence" value="ECO:0007669"/>
    <property type="project" value="EnsemblFungi"/>
</dbReference>
<dbReference type="GO" id="GO:0003682">
    <property type="term" value="F:chromatin binding"/>
    <property type="evidence" value="ECO:0007669"/>
    <property type="project" value="EnsemblFungi"/>
</dbReference>
<dbReference type="GO" id="GO:0003729">
    <property type="term" value="F:mRNA binding"/>
    <property type="evidence" value="ECO:0000318"/>
    <property type="project" value="GO_Central"/>
</dbReference>
<dbReference type="GO" id="GO:0003724">
    <property type="term" value="F:RNA helicase activity"/>
    <property type="evidence" value="ECO:0007669"/>
    <property type="project" value="UniProtKB-EC"/>
</dbReference>
<dbReference type="GO" id="GO:0042149">
    <property type="term" value="P:cellular response to glucose starvation"/>
    <property type="evidence" value="ECO:0007669"/>
    <property type="project" value="EnsemblFungi"/>
</dbReference>
<dbReference type="GO" id="GO:0006995">
    <property type="term" value="P:cellular response to nitrogen starvation"/>
    <property type="evidence" value="ECO:0007669"/>
    <property type="project" value="EnsemblFungi"/>
</dbReference>
<dbReference type="GO" id="GO:0000290">
    <property type="term" value="P:deadenylation-dependent decapping of nuclear-transcribed mRNA"/>
    <property type="evidence" value="ECO:0007669"/>
    <property type="project" value="EnsemblFungi"/>
</dbReference>
<dbReference type="GO" id="GO:0036267">
    <property type="term" value="P:invasive filamentous growth"/>
    <property type="evidence" value="ECO:0007669"/>
    <property type="project" value="EnsemblFungi"/>
</dbReference>
<dbReference type="GO" id="GO:0006397">
    <property type="term" value="P:mRNA processing"/>
    <property type="evidence" value="ECO:0007669"/>
    <property type="project" value="UniProtKB-KW"/>
</dbReference>
<dbReference type="GO" id="GO:0051028">
    <property type="term" value="P:mRNA transport"/>
    <property type="evidence" value="ECO:0007669"/>
    <property type="project" value="UniProtKB-KW"/>
</dbReference>
<dbReference type="GO" id="GO:0017148">
    <property type="term" value="P:negative regulation of translation"/>
    <property type="evidence" value="ECO:0000318"/>
    <property type="project" value="GO_Central"/>
</dbReference>
<dbReference type="GO" id="GO:0045900">
    <property type="term" value="P:negative regulation of translational elongation"/>
    <property type="evidence" value="ECO:0007669"/>
    <property type="project" value="EnsemblFungi"/>
</dbReference>
<dbReference type="GO" id="GO:0033962">
    <property type="term" value="P:P-body assembly"/>
    <property type="evidence" value="ECO:0000318"/>
    <property type="project" value="GO_Central"/>
</dbReference>
<dbReference type="GO" id="GO:0045727">
    <property type="term" value="P:positive regulation of translation"/>
    <property type="evidence" value="ECO:0007669"/>
    <property type="project" value="EnsemblFungi"/>
</dbReference>
<dbReference type="GO" id="GO:0007124">
    <property type="term" value="P:pseudohyphal growth"/>
    <property type="evidence" value="ECO:0007669"/>
    <property type="project" value="EnsemblFungi"/>
</dbReference>
<dbReference type="GO" id="GO:0010603">
    <property type="term" value="P:regulation of cytoplasmic mRNA processing body assembly"/>
    <property type="evidence" value="ECO:0007669"/>
    <property type="project" value="EnsemblFungi"/>
</dbReference>
<dbReference type="GO" id="GO:0000749">
    <property type="term" value="P:response to pheromone triggering conjugation with cellular fusion"/>
    <property type="evidence" value="ECO:0007669"/>
    <property type="project" value="EnsemblFungi"/>
</dbReference>
<dbReference type="GO" id="GO:0034063">
    <property type="term" value="P:stress granule assembly"/>
    <property type="evidence" value="ECO:0000318"/>
    <property type="project" value="GO_Central"/>
</dbReference>
<dbReference type="CDD" id="cd17940">
    <property type="entry name" value="DEADc_DDX6"/>
    <property type="match status" value="1"/>
</dbReference>
<dbReference type="CDD" id="cd18787">
    <property type="entry name" value="SF2_C_DEAD"/>
    <property type="match status" value="1"/>
</dbReference>
<dbReference type="FunFam" id="3.40.50.300:FF:000114">
    <property type="entry name" value="ATP-dependent RNA helicase DDX6"/>
    <property type="match status" value="1"/>
</dbReference>
<dbReference type="FunFam" id="3.40.50.300:FF:000364">
    <property type="entry name" value="ATP-dependent RNA helicase DDX6"/>
    <property type="match status" value="1"/>
</dbReference>
<dbReference type="Gene3D" id="3.40.50.300">
    <property type="entry name" value="P-loop containing nucleotide triphosphate hydrolases"/>
    <property type="match status" value="2"/>
</dbReference>
<dbReference type="InterPro" id="IPR011545">
    <property type="entry name" value="DEAD/DEAH_box_helicase_dom"/>
</dbReference>
<dbReference type="InterPro" id="IPR014001">
    <property type="entry name" value="Helicase_ATP-bd"/>
</dbReference>
<dbReference type="InterPro" id="IPR001650">
    <property type="entry name" value="Helicase_C-like"/>
</dbReference>
<dbReference type="InterPro" id="IPR027417">
    <property type="entry name" value="P-loop_NTPase"/>
</dbReference>
<dbReference type="InterPro" id="IPR000629">
    <property type="entry name" value="RNA-helicase_DEAD-box_CS"/>
</dbReference>
<dbReference type="InterPro" id="IPR014014">
    <property type="entry name" value="RNA_helicase_DEAD_Q_motif"/>
</dbReference>
<dbReference type="PANTHER" id="PTHR47960">
    <property type="entry name" value="DEAD-BOX ATP-DEPENDENT RNA HELICASE 50"/>
    <property type="match status" value="1"/>
</dbReference>
<dbReference type="Pfam" id="PF00270">
    <property type="entry name" value="DEAD"/>
    <property type="match status" value="1"/>
</dbReference>
<dbReference type="Pfam" id="PF00271">
    <property type="entry name" value="Helicase_C"/>
    <property type="match status" value="1"/>
</dbReference>
<dbReference type="SMART" id="SM00487">
    <property type="entry name" value="DEXDc"/>
    <property type="match status" value="1"/>
</dbReference>
<dbReference type="SMART" id="SM00490">
    <property type="entry name" value="HELICc"/>
    <property type="match status" value="1"/>
</dbReference>
<dbReference type="SUPFAM" id="SSF52540">
    <property type="entry name" value="P-loop containing nucleoside triphosphate hydrolases"/>
    <property type="match status" value="1"/>
</dbReference>
<dbReference type="PROSITE" id="PS00039">
    <property type="entry name" value="DEAD_ATP_HELICASE"/>
    <property type="match status" value="1"/>
</dbReference>
<dbReference type="PROSITE" id="PS51192">
    <property type="entry name" value="HELICASE_ATP_BIND_1"/>
    <property type="match status" value="1"/>
</dbReference>
<dbReference type="PROSITE" id="PS51194">
    <property type="entry name" value="HELICASE_CTER"/>
    <property type="match status" value="1"/>
</dbReference>
<dbReference type="PROSITE" id="PS51195">
    <property type="entry name" value="Q_MOTIF"/>
    <property type="match status" value="1"/>
</dbReference>
<keyword id="KW-0067">ATP-binding</keyword>
<keyword id="KW-0963">Cytoplasm</keyword>
<keyword id="KW-0347">Helicase</keyword>
<keyword id="KW-0378">Hydrolase</keyword>
<keyword id="KW-0507">mRNA processing</keyword>
<keyword id="KW-0509">mRNA transport</keyword>
<keyword id="KW-0547">Nucleotide-binding</keyword>
<keyword id="KW-1185">Reference proteome</keyword>
<keyword id="KW-0694">RNA-binding</keyword>
<keyword id="KW-0810">Translation regulation</keyword>
<keyword id="KW-0813">Transport</keyword>
<gene>
    <name type="primary">DHH1</name>
    <name type="ordered locus">ACR197W</name>
</gene>
<proteinExistence type="inferred from homology"/>
<organism>
    <name type="scientific">Eremothecium gossypii (strain ATCC 10895 / CBS 109.51 / FGSC 9923 / NRRL Y-1056)</name>
    <name type="common">Yeast</name>
    <name type="synonym">Ashbya gossypii</name>
    <dbReference type="NCBI Taxonomy" id="284811"/>
    <lineage>
        <taxon>Eukaryota</taxon>
        <taxon>Fungi</taxon>
        <taxon>Dikarya</taxon>
        <taxon>Ascomycota</taxon>
        <taxon>Saccharomycotina</taxon>
        <taxon>Saccharomycetes</taxon>
        <taxon>Saccharomycetales</taxon>
        <taxon>Saccharomycetaceae</taxon>
        <taxon>Eremothecium</taxon>
    </lineage>
</organism>
<name>DHH1_EREGS</name>